<reference key="1">
    <citation type="submission" date="2006-12" db="EMBL/GenBank/DDBJ databases">
        <title>Complete sequence of Mycobacterium vanbaalenii PYR-1.</title>
        <authorList>
            <consortium name="US DOE Joint Genome Institute"/>
            <person name="Copeland A."/>
            <person name="Lucas S."/>
            <person name="Lapidus A."/>
            <person name="Barry K."/>
            <person name="Detter J.C."/>
            <person name="Glavina del Rio T."/>
            <person name="Hammon N."/>
            <person name="Israni S."/>
            <person name="Dalin E."/>
            <person name="Tice H."/>
            <person name="Pitluck S."/>
            <person name="Singan V."/>
            <person name="Schmutz J."/>
            <person name="Larimer F."/>
            <person name="Land M."/>
            <person name="Hauser L."/>
            <person name="Kyrpides N."/>
            <person name="Anderson I.J."/>
            <person name="Miller C."/>
            <person name="Richardson P."/>
        </authorList>
    </citation>
    <scope>NUCLEOTIDE SEQUENCE [LARGE SCALE GENOMIC DNA]</scope>
    <source>
        <strain>DSM 7251 / JCM 13017 / BCRC 16820 / KCTC 9966 / NRRL B-24157 / PYR-1</strain>
    </source>
</reference>
<gene>
    <name evidence="1" type="primary">mhpB</name>
    <name type="ordered locus">Mvan_4244</name>
</gene>
<name>MHPB_MYCVP</name>
<sequence length="316" mass="33277">MAKSQMALCCMSHSPLLNLPGPAQELLDDIEGAIAAAREFVAAFDPDLVVTFSPDHYNGFFYRAMPPFCVGTAAAGVGDYGTYQGPLDVPADLAIDCARAVLDSDVDVAVSAAMDVDHGTVQPLQKLFGDATAKPVIPVFVNSVATPLGPMRRVRALGAAVGTHLAGLGKRVLVIGSGGLSHDPPVPTLATAPPAALDRIVRGVPMTTEQRQARQAAVIEAAREFASGQGALAPLNPDWDRAFLDLLDNGRLAEVDSWDNRWIAEQAGNSAHEVRTWVAAFAALAAQGKYETGNRYYRAAPELIAGFAIRTAVCTS</sequence>
<feature type="chain" id="PRO_0000337660" description="2,3-dihydroxyphenylpropionate/2,3-dihydroxicinnamic acid 1,2-dioxygenase">
    <location>
        <begin position="1"/>
        <end position="316"/>
    </location>
</feature>
<feature type="active site" description="Proton donor" evidence="1">
    <location>
        <position position="118"/>
    </location>
</feature>
<feature type="active site" description="Proton acceptor" evidence="1">
    <location>
        <position position="182"/>
    </location>
</feature>
<evidence type="ECO:0000255" key="1">
    <source>
        <dbReference type="HAMAP-Rule" id="MF_01653"/>
    </source>
</evidence>
<evidence type="ECO:0000305" key="2"/>
<proteinExistence type="inferred from homology"/>
<protein>
    <recommendedName>
        <fullName evidence="1">2,3-dihydroxyphenylpropionate/2,3-dihydroxicinnamic acid 1,2-dioxygenase</fullName>
        <ecNumber evidence="1">1.13.11.16</ecNumber>
    </recommendedName>
    <alternativeName>
        <fullName evidence="1">3-carboxyethylcatechol 2,3-dioxygenase</fullName>
    </alternativeName>
</protein>
<keyword id="KW-0058">Aromatic hydrocarbons catabolism</keyword>
<keyword id="KW-0223">Dioxygenase</keyword>
<keyword id="KW-0408">Iron</keyword>
<keyword id="KW-0560">Oxidoreductase</keyword>
<organism>
    <name type="scientific">Mycolicibacterium vanbaalenii (strain DSM 7251 / JCM 13017 / BCRC 16820 / KCTC 9966 / NRRL B-24157 / PYR-1)</name>
    <name type="common">Mycobacterium vanbaalenii</name>
    <dbReference type="NCBI Taxonomy" id="350058"/>
    <lineage>
        <taxon>Bacteria</taxon>
        <taxon>Bacillati</taxon>
        <taxon>Actinomycetota</taxon>
        <taxon>Actinomycetes</taxon>
        <taxon>Mycobacteriales</taxon>
        <taxon>Mycobacteriaceae</taxon>
        <taxon>Mycolicibacterium</taxon>
    </lineage>
</organism>
<accession>A1TCX1</accession>
<comment type="function">
    <text evidence="1">Catalyzes the non-heme iron(II)-dependent oxidative cleavage of 2,3-dihydroxyphenylpropionic acid and 2,3-dihydroxicinnamic acid into 2-hydroxy-6-ketononadienedioate and 2-hydroxy-6-ketononatrienedioate, respectively.</text>
</comment>
<comment type="catalytic activity">
    <reaction evidence="1">
        <text>3-(2,3-dihydroxyphenyl)propanoate + O2 = (2Z,4E)-2-hydroxy-6-oxonona-2,4-dienedioate + H(+)</text>
        <dbReference type="Rhea" id="RHEA:23840"/>
        <dbReference type="ChEBI" id="CHEBI:15378"/>
        <dbReference type="ChEBI" id="CHEBI:15379"/>
        <dbReference type="ChEBI" id="CHEBI:46951"/>
        <dbReference type="ChEBI" id="CHEBI:66887"/>
        <dbReference type="EC" id="1.13.11.16"/>
    </reaction>
</comment>
<comment type="catalytic activity">
    <reaction evidence="1">
        <text>(2E)-3-(2,3-dihydroxyphenyl)prop-2-enoate + O2 = (2Z,4E,7E)-2-hydroxy-6-oxonona-2,4,7-trienedioate + H(+)</text>
        <dbReference type="Rhea" id="RHEA:25054"/>
        <dbReference type="ChEBI" id="CHEBI:15378"/>
        <dbReference type="ChEBI" id="CHEBI:15379"/>
        <dbReference type="ChEBI" id="CHEBI:58642"/>
        <dbReference type="ChEBI" id="CHEBI:66888"/>
        <dbReference type="EC" id="1.13.11.16"/>
    </reaction>
</comment>
<comment type="cofactor">
    <cofactor evidence="1">
        <name>Fe(2+)</name>
        <dbReference type="ChEBI" id="CHEBI:29033"/>
    </cofactor>
</comment>
<comment type="pathway">
    <text evidence="1">Aromatic compound metabolism; 3-phenylpropanoate degradation.</text>
</comment>
<comment type="subunit">
    <text evidence="1">Homotetramer.</text>
</comment>
<comment type="similarity">
    <text evidence="1">Belongs to the LigB/MhpB extradiol dioxygenase family.</text>
</comment>
<comment type="sequence caution" evidence="2">
    <conflict type="erroneous initiation">
        <sequence resource="EMBL-CDS" id="ABM15021"/>
    </conflict>
</comment>
<dbReference type="EC" id="1.13.11.16" evidence="1"/>
<dbReference type="EMBL" id="CP000511">
    <property type="protein sequence ID" value="ABM15021.1"/>
    <property type="status" value="ALT_INIT"/>
    <property type="molecule type" value="Genomic_DNA"/>
</dbReference>
<dbReference type="SMR" id="A1TCX1"/>
<dbReference type="STRING" id="350058.Mvan_4244"/>
<dbReference type="KEGG" id="mva:Mvan_4244"/>
<dbReference type="eggNOG" id="COG3384">
    <property type="taxonomic scope" value="Bacteria"/>
</dbReference>
<dbReference type="HOGENOM" id="CLU_078149_0_0_11"/>
<dbReference type="UniPathway" id="UPA00714"/>
<dbReference type="Proteomes" id="UP000009159">
    <property type="component" value="Chromosome"/>
</dbReference>
<dbReference type="GO" id="GO:0047070">
    <property type="term" value="F:3-carboxyethylcatechol 2,3-dioxygenase activity"/>
    <property type="evidence" value="ECO:0007669"/>
    <property type="project" value="UniProtKB-UniRule"/>
</dbReference>
<dbReference type="GO" id="GO:0008198">
    <property type="term" value="F:ferrous iron binding"/>
    <property type="evidence" value="ECO:0007669"/>
    <property type="project" value="InterPro"/>
</dbReference>
<dbReference type="GO" id="GO:0019380">
    <property type="term" value="P:3-phenylpropionate catabolic process"/>
    <property type="evidence" value="ECO:0007669"/>
    <property type="project" value="UniProtKB-UniRule"/>
</dbReference>
<dbReference type="CDD" id="cd07365">
    <property type="entry name" value="MhpB_like"/>
    <property type="match status" value="1"/>
</dbReference>
<dbReference type="Gene3D" id="3.40.830.10">
    <property type="entry name" value="LigB-like"/>
    <property type="match status" value="1"/>
</dbReference>
<dbReference type="HAMAP" id="MF_01653">
    <property type="entry name" value="MhpB"/>
    <property type="match status" value="1"/>
</dbReference>
<dbReference type="InterPro" id="IPR023789">
    <property type="entry name" value="DHPP/DHXA_dioxygenase"/>
</dbReference>
<dbReference type="InterPro" id="IPR004183">
    <property type="entry name" value="Xdiol_dOase_suB"/>
</dbReference>
<dbReference type="NCBIfam" id="NF009910">
    <property type="entry name" value="PRK13370.1-4"/>
    <property type="match status" value="1"/>
</dbReference>
<dbReference type="Pfam" id="PF02900">
    <property type="entry name" value="LigB"/>
    <property type="match status" value="1"/>
</dbReference>
<dbReference type="SUPFAM" id="SSF53213">
    <property type="entry name" value="LigB-like"/>
    <property type="match status" value="1"/>
</dbReference>